<organism>
    <name type="scientific">Influenza A virus (strain A/Budgerigar/Hokkaido/1/1977 H4N6)</name>
    <dbReference type="NCBI Taxonomy" id="385587"/>
    <lineage>
        <taxon>Viruses</taxon>
        <taxon>Riboviria</taxon>
        <taxon>Orthornavirae</taxon>
        <taxon>Negarnaviricota</taxon>
        <taxon>Polyploviricotina</taxon>
        <taxon>Insthoviricetes</taxon>
        <taxon>Articulavirales</taxon>
        <taxon>Orthomyxoviridae</taxon>
        <taxon>Alphainfluenzavirus</taxon>
        <taxon>Alphainfluenzavirus influenzae</taxon>
        <taxon>Influenza A virus</taxon>
    </lineage>
</organism>
<name>NCAP_I77AG</name>
<feature type="chain" id="PRO_0000079027" description="Nucleoprotein">
    <location>
        <begin position="1"/>
        <end position="498"/>
    </location>
</feature>
<feature type="region of interest" description="Disordered" evidence="2">
    <location>
        <begin position="1"/>
        <end position="21"/>
    </location>
</feature>
<feature type="short sequence motif" description="Unconventional nuclear localization signal" evidence="1">
    <location>
        <begin position="1"/>
        <end position="18"/>
    </location>
</feature>
<feature type="short sequence motif" description="Bipartite nuclear localization signal" evidence="1">
    <location>
        <begin position="198"/>
        <end position="216"/>
    </location>
</feature>
<gene>
    <name evidence="1" type="primary">NP</name>
</gene>
<sequence length="498" mass="56292">MASQGTKRSYEQMETGGERQNATEIRASVGRMVGGIGRFYIQMCTEIKLSDYEGRLIQNSITIERMVLSAFEERRNKYLEEHPSAGKDPKKTGGPIYRRRDGKWVRELILYDKEEIRRIWRQANNGEDATAGLTHLMIWHSNLNDATYQRTRALVRTGMDPRMCSLMQGSTLPRRSGAAGAAIKGVGTMVMELIRMIKRGINDRNFWRGENGRRTRTAYERMCNILKGKFQTAAQRAMMDQVRESRNPGNAEIEDLIFLARSALILRGSVAHKSCLPACVYGLAVASGYDFEREGYSLVGIDPFRLLQNSQVFSLIRPNENPAHKSQLVWMACHSAAFEDLRVSSFIRGTRLVPRGQLSTRGVQIASNENMEAMDSNTLELRSRYWAIRTRSGGNTNQQRASAGQISVQPTFSVQRNLPFERATIMAAFTGNNEGRTSDMRTEIIRMMESARPEDVSFQGRGVFELSDEKATNPIVPSFDMSNEGSYFFGDNAEEYDN</sequence>
<keyword id="KW-0167">Capsid protein</keyword>
<keyword id="KW-1139">Helical capsid protein</keyword>
<keyword id="KW-1048">Host nucleus</keyword>
<keyword id="KW-0945">Host-virus interaction</keyword>
<keyword id="KW-0687">Ribonucleoprotein</keyword>
<keyword id="KW-0694">RNA-binding</keyword>
<keyword id="KW-0543">Viral nucleoprotein</keyword>
<keyword id="KW-1163">Viral penetration into host nucleus</keyword>
<keyword id="KW-0946">Virion</keyword>
<keyword id="KW-1160">Virus entry into host cell</keyword>
<reference key="1">
    <citation type="journal article" date="1990" name="J. Virol.">
        <title>Evolution of the nucleoprotein gene of influenza A virus.</title>
        <authorList>
            <person name="Gorman O.T."/>
            <person name="Bean W.J."/>
            <person name="Kawaoka Y."/>
            <person name="Webster R.G."/>
        </authorList>
    </citation>
    <scope>NUCLEOTIDE SEQUENCE [GENOMIC RNA]</scope>
</reference>
<dbReference type="EMBL" id="M30765">
    <property type="protein sequence ID" value="AAA43486.1"/>
    <property type="molecule type" value="Genomic_RNA"/>
</dbReference>
<dbReference type="SMR" id="P15660"/>
<dbReference type="GO" id="GO:0019029">
    <property type="term" value="C:helical viral capsid"/>
    <property type="evidence" value="ECO:0007669"/>
    <property type="project" value="UniProtKB-UniRule"/>
</dbReference>
<dbReference type="GO" id="GO:0043657">
    <property type="term" value="C:host cell"/>
    <property type="evidence" value="ECO:0007669"/>
    <property type="project" value="GOC"/>
</dbReference>
<dbReference type="GO" id="GO:0042025">
    <property type="term" value="C:host cell nucleus"/>
    <property type="evidence" value="ECO:0007669"/>
    <property type="project" value="UniProtKB-SubCell"/>
</dbReference>
<dbReference type="GO" id="GO:1990904">
    <property type="term" value="C:ribonucleoprotein complex"/>
    <property type="evidence" value="ECO:0007669"/>
    <property type="project" value="UniProtKB-KW"/>
</dbReference>
<dbReference type="GO" id="GO:0019013">
    <property type="term" value="C:viral nucleocapsid"/>
    <property type="evidence" value="ECO:0007669"/>
    <property type="project" value="UniProtKB-UniRule"/>
</dbReference>
<dbReference type="GO" id="GO:0003723">
    <property type="term" value="F:RNA binding"/>
    <property type="evidence" value="ECO:0007669"/>
    <property type="project" value="UniProtKB-UniRule"/>
</dbReference>
<dbReference type="GO" id="GO:0005198">
    <property type="term" value="F:structural molecule activity"/>
    <property type="evidence" value="ECO:0007669"/>
    <property type="project" value="UniProtKB-UniRule"/>
</dbReference>
<dbReference type="GO" id="GO:0046718">
    <property type="term" value="P:symbiont entry into host cell"/>
    <property type="evidence" value="ECO:0007669"/>
    <property type="project" value="UniProtKB-KW"/>
</dbReference>
<dbReference type="GO" id="GO:0075732">
    <property type="term" value="P:viral penetration into host nucleus"/>
    <property type="evidence" value="ECO:0007669"/>
    <property type="project" value="UniProtKB-UniRule"/>
</dbReference>
<dbReference type="HAMAP" id="MF_04070">
    <property type="entry name" value="INFV_NCAP"/>
    <property type="match status" value="1"/>
</dbReference>
<dbReference type="InterPro" id="IPR002141">
    <property type="entry name" value="Flu_NP"/>
</dbReference>
<dbReference type="Pfam" id="PF00506">
    <property type="entry name" value="Flu_NP"/>
    <property type="match status" value="1"/>
</dbReference>
<dbReference type="SUPFAM" id="SSF161003">
    <property type="entry name" value="flu NP-like"/>
    <property type="match status" value="1"/>
</dbReference>
<evidence type="ECO:0000255" key="1">
    <source>
        <dbReference type="HAMAP-Rule" id="MF_04070"/>
    </source>
</evidence>
<evidence type="ECO:0000256" key="2">
    <source>
        <dbReference type="SAM" id="MobiDB-lite"/>
    </source>
</evidence>
<protein>
    <recommendedName>
        <fullName evidence="1">Nucleoprotein</fullName>
    </recommendedName>
    <alternativeName>
        <fullName evidence="1">Nucleocapsid protein</fullName>
        <shortName evidence="1">Protein N</shortName>
    </alternativeName>
</protein>
<accession>P15660</accession>
<proteinExistence type="inferred from homology"/>
<organismHost>
    <name type="scientific">Aves</name>
    <dbReference type="NCBI Taxonomy" id="8782"/>
</organismHost>
<organismHost>
    <name type="scientific">Sus scrofa</name>
    <name type="common">Pig</name>
    <dbReference type="NCBI Taxonomy" id="9823"/>
</organismHost>
<comment type="function">
    <text evidence="1">Encapsidates the negative strand viral RNA, protecting it from nucleases. The encapsidated genomic RNA is termed the ribonucleoprotein (RNP) and serves as template for transcription and replication. The RNP needs to be localized in the host nucleus to start an infectious cycle, but is too large to diffuse through the nuclear pore complex. NP comprises at least 2 nuclear localization signals that are responsible for the active RNP import into the nucleus through cellular importin alpha/beta pathway. Later in the infection, nclear export of RNPs are mediated through viral proteins NEP interacting with M1 which binds nucleoproteins. It is possible that nucleoprotein binds directly host exportin-1/XPO1 and plays an active role in RNPs nuclear export. M1 interaction with RNP seems to hide nucleoprotein's nuclear localization signals. Soon after a virion infects a new cell, M1 dissociates from the RNP under acidification of the virion driven by M2 protein. Dissociation of M1 from RNP unmasks nucleoprotein's nuclear localization signals, targeting the RNP to the nucleus.</text>
</comment>
<comment type="subunit">
    <text evidence="1">Homomultimerizes to form the nucleocapsid. May bind host exportin-1/XPO1. Binds to viral genomic RNA. Protein-RNA contacts are mediated by a combination of electrostatic interactions between positively charged residues and the phosphate backbone and planar interactions between aromatic side chains and bases.</text>
</comment>
<comment type="subcellular location">
    <subcellularLocation>
        <location evidence="1">Virion</location>
    </subcellularLocation>
    <subcellularLocation>
        <location evidence="1">Host nucleus</location>
    </subcellularLocation>
</comment>
<comment type="PTM">
    <text evidence="1">Late in virus-infected cells, may be cleaved from a 56-kDa protein to a 53-kDa protein by a cellular caspase. This cleavage might be a marker for the onset of apoptosis in infected cells or have a specific function in virus host interaction.</text>
</comment>
<comment type="similarity">
    <text evidence="1">Belongs to the influenza viruses nucleoprotein family.</text>
</comment>